<proteinExistence type="inferred from homology"/>
<accession>E9Q6X9</accession>
<accession>A2ACC5</accession>
<organism>
    <name type="scientific">Mus musculus</name>
    <name type="common">Mouse</name>
    <dbReference type="NCBI Taxonomy" id="10090"/>
    <lineage>
        <taxon>Eukaryota</taxon>
        <taxon>Metazoa</taxon>
        <taxon>Chordata</taxon>
        <taxon>Craniata</taxon>
        <taxon>Vertebrata</taxon>
        <taxon>Euteleostomi</taxon>
        <taxon>Mammalia</taxon>
        <taxon>Eutheria</taxon>
        <taxon>Euarchontoglires</taxon>
        <taxon>Glires</taxon>
        <taxon>Rodentia</taxon>
        <taxon>Myomorpha</taxon>
        <taxon>Muroidea</taxon>
        <taxon>Muridae</taxon>
        <taxon>Murinae</taxon>
        <taxon>Mus</taxon>
        <taxon>Mus</taxon>
    </lineage>
</organism>
<evidence type="ECO:0000250" key="1"/>
<evidence type="ECO:0000255" key="2">
    <source>
        <dbReference type="PROSITE-ProRule" id="PRU00172"/>
    </source>
</evidence>
<evidence type="ECO:0000256" key="3">
    <source>
        <dbReference type="SAM" id="MobiDB-lite"/>
    </source>
</evidence>
<evidence type="ECO:0000305" key="4"/>
<evidence type="ECO:0000312" key="5">
    <source>
        <dbReference type="MGI" id="MGI:3649852"/>
    </source>
</evidence>
<keyword id="KW-0343">GTPase activation</keyword>
<keyword id="KW-1185">Reference proteome</keyword>
<sequence length="672" mass="74333">MTEPSLLPAAKMEGLALLPLTSPCPRIPRARISRQPGRWAHLGCSPGLSTGPTNLQQHPQKPRPADCSHSRLSWAESLSMDGFWMEVERIQQRAEVKKEDCGEGRSQLLEGDTESQWLQDTGLSGLAGGLGLDGDHQGLLSTLTQTQVAAVCRRLDIYARSARRRQKAPVRDVRDIFGVFTSRELAPENGVSGMKWTKINSEDSASPLRSAEPGGPQELAGMEEVFNMDSAYSEQAAVLLQRAWPSPGGTTAWGKGPLPRFRIPKGRLGVTRIGDLSSRDMKKIPPLALIELTALYDILGLDLKRCKGGKWKGPDSGLFGVPLHSLLEADHRVFPSTQVPLLLQALLSCLEKRGLDTEGILRVPGSQARVKGLEQKLERDFYAGLVSWDKVHPNDASDLLKRFLRKLPVPLLTAEYLPAFASVPDIPDLKQRLQALHLLVLLLPEPNRNTLKALLEFLRKVAAQEQHNKMTLWNVSTVMVPSLFLPRGRPPKLTKGGKQLAEGAAEVVCMMVQYQDLLWTVASFLVAQVRKLNDSNGRRSQLCDGGLKTWLWRTHVDRDKAGEGLEATPKVAKIQVQATWPSMDLLQVPLNPSTRVTHVLKLFTEHLNPGSQPEEGSENPNSLLSHNTKPVTFLVYEVGGNIGERRLDPDAYLLDLYRANPHGEWVIRQSPT</sequence>
<feature type="chain" id="PRO_0000415822" description="Rho GTPase-activating protein 40">
    <location>
        <begin position="1"/>
        <end position="672"/>
    </location>
</feature>
<feature type="domain" description="Rho-GAP" evidence="2">
    <location>
        <begin position="321"/>
        <end position="519"/>
    </location>
</feature>
<feature type="region of interest" description="Disordered" evidence="3">
    <location>
        <begin position="43"/>
        <end position="68"/>
    </location>
</feature>
<feature type="compositionally biased region" description="Polar residues" evidence="3">
    <location>
        <begin position="47"/>
        <end position="59"/>
    </location>
</feature>
<feature type="site" description="Arginine finger; crucial for GTP hydrolysis by stabilizing the transition state" evidence="2">
    <location>
        <position position="362"/>
    </location>
</feature>
<comment type="function">
    <text evidence="1">GTPase activator for the Rho-type GTPases by converting them to an inactive GDP-bound state.</text>
</comment>
<comment type="sequence caution" evidence="4">
    <conflict type="erroneous initiation">
        <sequence resource="EMBL-CDS" id="CAM23059"/>
    </conflict>
    <text>Extended N-terminus.</text>
</comment>
<protein>
    <recommendedName>
        <fullName evidence="4">Rho GTPase-activating protein 40</fullName>
    </recommendedName>
    <alternativeName>
        <fullName>Rho-type GTPase-activating protein 40</fullName>
    </alternativeName>
</protein>
<name>RHG40_MOUSE</name>
<dbReference type="EMBL" id="AL663091">
    <property type="protein sequence ID" value="CAM23059.1"/>
    <property type="status" value="ALT_INIT"/>
    <property type="molecule type" value="Genomic_DNA"/>
</dbReference>
<dbReference type="CCDS" id="CCDS50787.1"/>
<dbReference type="RefSeq" id="NP_001138487.1">
    <property type="nucleotide sequence ID" value="NM_001145015.2"/>
</dbReference>
<dbReference type="SMR" id="E9Q6X9"/>
<dbReference type="BioGRID" id="244335">
    <property type="interactions" value="19"/>
</dbReference>
<dbReference type="FunCoup" id="E9Q6X9">
    <property type="interactions" value="502"/>
</dbReference>
<dbReference type="STRING" id="10090.ENSMUSP00000130349"/>
<dbReference type="PhosphoSitePlus" id="E9Q6X9"/>
<dbReference type="PaxDb" id="10090-ENSMUSP00000096736"/>
<dbReference type="ProteomicsDB" id="254969"/>
<dbReference type="Antibodypedia" id="51585">
    <property type="antibodies" value="54 antibodies from 8 providers"/>
</dbReference>
<dbReference type="Ensembl" id="ENSMUST00000099133.11">
    <property type="protein sequence ID" value="ENSMUSP00000096736.5"/>
    <property type="gene ID" value="ENSMUSG00000074625.12"/>
</dbReference>
<dbReference type="GeneID" id="545481"/>
<dbReference type="KEGG" id="mmu:545481"/>
<dbReference type="UCSC" id="uc012cih.1">
    <property type="organism name" value="mouse"/>
</dbReference>
<dbReference type="AGR" id="MGI:3649852"/>
<dbReference type="CTD" id="343578"/>
<dbReference type="MGI" id="MGI:3649852">
    <property type="gene designation" value="Arhgap40"/>
</dbReference>
<dbReference type="VEuPathDB" id="HostDB:ENSMUSG00000074625"/>
<dbReference type="eggNOG" id="KOG2200">
    <property type="taxonomic scope" value="Eukaryota"/>
</dbReference>
<dbReference type="GeneTree" id="ENSGT00940000162174"/>
<dbReference type="HOGENOM" id="CLU_023268_2_1_1"/>
<dbReference type="InParanoid" id="E9Q6X9"/>
<dbReference type="OMA" id="GDSGMKW"/>
<dbReference type="OrthoDB" id="27680at2759"/>
<dbReference type="PhylomeDB" id="E9Q6X9"/>
<dbReference type="TreeFam" id="TF314044"/>
<dbReference type="Reactome" id="R-MMU-8980692">
    <property type="pathway name" value="RHOA GTPase cycle"/>
</dbReference>
<dbReference type="Reactome" id="R-MMU-9013148">
    <property type="pathway name" value="CDC42 GTPase cycle"/>
</dbReference>
<dbReference type="BioGRID-ORCS" id="545481">
    <property type="hits" value="4 hits in 77 CRISPR screens"/>
</dbReference>
<dbReference type="PRO" id="PR:E9Q6X9"/>
<dbReference type="Proteomes" id="UP000000589">
    <property type="component" value="Chromosome 2"/>
</dbReference>
<dbReference type="RNAct" id="E9Q6X9">
    <property type="molecule type" value="protein"/>
</dbReference>
<dbReference type="Bgee" id="ENSMUSG00000074625">
    <property type="expression patterns" value="Expressed in esophagus and 30 other cell types or tissues"/>
</dbReference>
<dbReference type="ExpressionAtlas" id="E9Q6X9">
    <property type="expression patterns" value="baseline and differential"/>
</dbReference>
<dbReference type="GO" id="GO:0005096">
    <property type="term" value="F:GTPase activator activity"/>
    <property type="evidence" value="ECO:0007669"/>
    <property type="project" value="UniProtKB-KW"/>
</dbReference>
<dbReference type="GO" id="GO:0007165">
    <property type="term" value="P:signal transduction"/>
    <property type="evidence" value="ECO:0007669"/>
    <property type="project" value="InterPro"/>
</dbReference>
<dbReference type="FunFam" id="1.10.555.10:FF:000018">
    <property type="entry name" value="Rho GTPase activating protein 28"/>
    <property type="match status" value="1"/>
</dbReference>
<dbReference type="Gene3D" id="1.10.555.10">
    <property type="entry name" value="Rho GTPase activation protein"/>
    <property type="match status" value="1"/>
</dbReference>
<dbReference type="InterPro" id="IPR008936">
    <property type="entry name" value="Rho_GTPase_activation_prot"/>
</dbReference>
<dbReference type="InterPro" id="IPR000198">
    <property type="entry name" value="RhoGAP_dom"/>
</dbReference>
<dbReference type="PANTHER" id="PTHR14963">
    <property type="entry name" value="RHO GTPASE ACTIVATING PROTEIN 18,19-RELATED"/>
    <property type="match status" value="1"/>
</dbReference>
<dbReference type="PANTHER" id="PTHR14963:SF4">
    <property type="entry name" value="RHO GTPASE-ACTIVATING PROTEIN 40"/>
    <property type="match status" value="1"/>
</dbReference>
<dbReference type="Pfam" id="PF00620">
    <property type="entry name" value="RhoGAP"/>
    <property type="match status" value="1"/>
</dbReference>
<dbReference type="Pfam" id="PF25442">
    <property type="entry name" value="Ubiquitin_RHG40_C"/>
    <property type="match status" value="1"/>
</dbReference>
<dbReference type="SMART" id="SM00324">
    <property type="entry name" value="RhoGAP"/>
    <property type="match status" value="1"/>
</dbReference>
<dbReference type="SUPFAM" id="SSF48350">
    <property type="entry name" value="GTPase activation domain, GAP"/>
    <property type="match status" value="1"/>
</dbReference>
<dbReference type="PROSITE" id="PS50238">
    <property type="entry name" value="RHOGAP"/>
    <property type="match status" value="1"/>
</dbReference>
<gene>
    <name evidence="5" type="primary">Arhgap40</name>
</gene>
<reference key="1">
    <citation type="journal article" date="2009" name="PLoS Biol.">
        <title>Lineage-specific biology revealed by a finished genome assembly of the mouse.</title>
        <authorList>
            <person name="Church D.M."/>
            <person name="Goodstadt L."/>
            <person name="Hillier L.W."/>
            <person name="Zody M.C."/>
            <person name="Goldstein S."/>
            <person name="She X."/>
            <person name="Bult C.J."/>
            <person name="Agarwala R."/>
            <person name="Cherry J.L."/>
            <person name="DiCuccio M."/>
            <person name="Hlavina W."/>
            <person name="Kapustin Y."/>
            <person name="Meric P."/>
            <person name="Maglott D."/>
            <person name="Birtle Z."/>
            <person name="Marques A.C."/>
            <person name="Graves T."/>
            <person name="Zhou S."/>
            <person name="Teague B."/>
            <person name="Potamousis K."/>
            <person name="Churas C."/>
            <person name="Place M."/>
            <person name="Herschleb J."/>
            <person name="Runnheim R."/>
            <person name="Forrest D."/>
            <person name="Amos-Landgraf J."/>
            <person name="Schwartz D.C."/>
            <person name="Cheng Z."/>
            <person name="Lindblad-Toh K."/>
            <person name="Eichler E.E."/>
            <person name="Ponting C.P."/>
        </authorList>
    </citation>
    <scope>NUCLEOTIDE SEQUENCE [LARGE SCALE GENOMIC DNA]</scope>
    <source>
        <strain>C57BL/6J</strain>
    </source>
</reference>